<organism>
    <name type="scientific">Ectopseudomonas oleovorans</name>
    <name type="common">Pseudomonas oleovorans</name>
    <dbReference type="NCBI Taxonomy" id="301"/>
    <lineage>
        <taxon>Bacteria</taxon>
        <taxon>Pseudomonadati</taxon>
        <taxon>Pseudomonadota</taxon>
        <taxon>Gammaproteobacteria</taxon>
        <taxon>Pseudomonadales</taxon>
        <taxon>Pseudomonadaceae</taxon>
        <taxon>Ectopseudomonas</taxon>
    </lineage>
</organism>
<sequence>MKIIINNDFPVAKVGADQITTLVSAKVHSCIYRPRLSIADGAAPRVCLYRAPPGYGKTVALAFEWLRHRTAGRPAVWLSLRASSYSEFDICAEIIEQLETFEMVKFSRVREGVSKPALLRDLASSLWQSTSNNEIETLVCLDNINHDLDLPLLHALMEFMLNTPKNIRFAVAGNTIKGFSQLKLAGAMREYTEKDLAFSAEEAVALAEAESVLGVPEEQIETLVQEVEGWPALVVFLLKRELPAKHISAVVEVDNYFRDEIFEAIPERYRVFLANSSLLDFVTPDQYNYVFKCVNGVSCIKYLSTNYMLLRHVSGEPAQFTLHPVLRNFLREITWTENPAKRSYLLKRAAFWHWRRGEYQYAIRISLRANDCRWAVSMSERIILDLSFRQGEIDALRQWLLELPKQAWHQKPIVLISYAWVLYFSQQGARAEKLIKDLSSQSDKKNKWQEKEWLQLVLAIGKATKDEMLSSEELCNKWISLFGDSNAVGKGAALTCLAFIFASEYRFAELEKVLAQAQAVNKFAKQNFAFGWLYVARFQQALASGKMGWARQIITQARTDSRAQMMESEFTSKMFDALELELHYELRCLDTSEEKLSKILEFISNHGVTDVFFSVCRAVSAWRLGRSDLNGSIEILEWAKAHAVEKNLPRLEVMSQIEIYQRLVCQGITGINNLKTLEDHKIFSGQHSAPLKARLLLVQSLVLSRDRNFHSAAHRALLAIQQARKINAGQLEVRGLLCLAGAQAGAGDLKKAQLNIVYAVEIAKQLQCFQTVLDEVCLIERIIPASCEAFTAVNLDQAIGAFSLPRIVEIGKSAENKADALLTRKQIAVLRLVKEGCSNKQIATNMHVTEDAIKWHMRKIFATLNVVNRTQATIEAERQGII</sequence>
<protein>
    <recommendedName>
        <fullName>HTH-type transcriptional regulator AlkS</fullName>
    </recommendedName>
</protein>
<name>ALKS_ECTOL</name>
<reference key="1">
    <citation type="journal article" date="1999" name="Appl. Environ. Microbiol.">
        <title>An alkane-responsive expression system for the production of fine chemicals.</title>
        <authorList>
            <person name="Panke S."/>
            <person name="Meyer A."/>
            <person name="Huber C.M."/>
            <person name="Witholt B."/>
            <person name="Wubbolts M.G."/>
        </authorList>
    </citation>
    <scope>NUCLEOTIDE SEQUENCE [GENOMIC DNA]</scope>
    <scope>FUNCTION</scope>
    <source>
        <strain>ATCC 29347 / CIP 105816 / NRRL B-14683 / TF4-1L</strain>
    </source>
</reference>
<reference key="2">
    <citation type="journal article" date="1990" name="J. Mol. Biol.">
        <title>Rubredoxin reductase of Pseudomonas oleovorans. Structural relationship to other flavoprotein oxidoreductases based on one NAD and two FAD fingerprints.</title>
        <authorList>
            <person name="Eggink G."/>
            <person name="Engel H."/>
            <person name="Vriend G."/>
            <person name="Terpstra P."/>
            <person name="Witholt B."/>
        </authorList>
    </citation>
    <scope>NUCLEOTIDE SEQUENCE [GENOMIC DNA] OF 659-882</scope>
    <source>
        <strain>ATCC 29347 / CIP 105816 / NRRL B-14683 / TF4-1L</strain>
    </source>
</reference>
<reference key="3">
    <citation type="journal article" date="2000" name="Mol. Microbiol.">
        <title>A positive feedback mechanism controls expression of AlkS, the transcriptional regulator of the Pseudomonas oleovorans alkane degradation pathway.</title>
        <authorList>
            <person name="Canosa I."/>
            <person name="Sanchez-Romero J.M."/>
            <person name="Yuste L."/>
            <person name="Rojo F."/>
        </authorList>
    </citation>
    <scope>FUNCTION</scope>
    <scope>INDUCTION</scope>
</reference>
<evidence type="ECO:0000255" key="1"/>
<evidence type="ECO:0000255" key="2">
    <source>
        <dbReference type="PROSITE-ProRule" id="PRU00411"/>
    </source>
</evidence>
<evidence type="ECO:0000269" key="3">
    <source>
    </source>
</evidence>
<evidence type="ECO:0000269" key="4">
    <source>
    </source>
</evidence>
<proteinExistence type="evidence at transcript level"/>
<dbReference type="EMBL" id="AJ245436">
    <property type="protein sequence ID" value="CAB54064.1"/>
    <property type="molecule type" value="Genomic_DNA"/>
</dbReference>
<dbReference type="PIR" id="S09113">
    <property type="entry name" value="S09113"/>
</dbReference>
<dbReference type="SMR" id="P17051"/>
<dbReference type="KEGG" id="ag:CAB54064"/>
<dbReference type="UniPathway" id="UPA00191"/>
<dbReference type="GO" id="GO:0005524">
    <property type="term" value="F:ATP binding"/>
    <property type="evidence" value="ECO:0007669"/>
    <property type="project" value="UniProtKB-KW"/>
</dbReference>
<dbReference type="GO" id="GO:0003677">
    <property type="term" value="F:DNA binding"/>
    <property type="evidence" value="ECO:0007669"/>
    <property type="project" value="UniProtKB-KW"/>
</dbReference>
<dbReference type="GO" id="GO:0043448">
    <property type="term" value="P:alkane catabolic process"/>
    <property type="evidence" value="ECO:0007669"/>
    <property type="project" value="UniProtKB-UniPathway"/>
</dbReference>
<dbReference type="GO" id="GO:0006355">
    <property type="term" value="P:regulation of DNA-templated transcription"/>
    <property type="evidence" value="ECO:0007669"/>
    <property type="project" value="InterPro"/>
</dbReference>
<dbReference type="CDD" id="cd06170">
    <property type="entry name" value="LuxR_C_like"/>
    <property type="match status" value="1"/>
</dbReference>
<dbReference type="Gene3D" id="1.10.10.10">
    <property type="entry name" value="Winged helix-like DNA-binding domain superfamily/Winged helix DNA-binding domain"/>
    <property type="match status" value="1"/>
</dbReference>
<dbReference type="InterPro" id="IPR016032">
    <property type="entry name" value="Sig_transdc_resp-reg_C-effctor"/>
</dbReference>
<dbReference type="InterPro" id="IPR000792">
    <property type="entry name" value="Tscrpt_reg_LuxR_C"/>
</dbReference>
<dbReference type="InterPro" id="IPR036388">
    <property type="entry name" value="WH-like_DNA-bd_sf"/>
</dbReference>
<dbReference type="PANTHER" id="PTHR44688">
    <property type="entry name" value="DNA-BINDING TRANSCRIPTIONAL ACTIVATOR DEVR_DOSR"/>
    <property type="match status" value="1"/>
</dbReference>
<dbReference type="PANTHER" id="PTHR44688:SF16">
    <property type="entry name" value="DNA-BINDING TRANSCRIPTIONAL ACTIVATOR DEVR_DOSR"/>
    <property type="match status" value="1"/>
</dbReference>
<dbReference type="Pfam" id="PF00196">
    <property type="entry name" value="GerE"/>
    <property type="match status" value="1"/>
</dbReference>
<dbReference type="SMART" id="SM00421">
    <property type="entry name" value="HTH_LUXR"/>
    <property type="match status" value="1"/>
</dbReference>
<dbReference type="SUPFAM" id="SSF46894">
    <property type="entry name" value="C-terminal effector domain of the bipartite response regulators"/>
    <property type="match status" value="1"/>
</dbReference>
<dbReference type="PROSITE" id="PS50043">
    <property type="entry name" value="HTH_LUXR_2"/>
    <property type="match status" value="1"/>
</dbReference>
<comment type="function">
    <text evidence="3 4">This protein activates the expression of alkBFGHJKL operon in the presence of alkanes.</text>
</comment>
<comment type="pathway">
    <text>Hydrocarbon metabolism; alkane degradation.</text>
</comment>
<comment type="induction">
    <text evidence="4">Protein expression is autoregulated and sigma S-dependent in stationary phase.</text>
</comment>
<geneLocation type="plasmid">
    <name>OCT</name>
</geneLocation>
<keyword id="KW-0067">ATP-binding</keyword>
<keyword id="KW-0238">DNA-binding</keyword>
<keyword id="KW-0547">Nucleotide-binding</keyword>
<keyword id="KW-0614">Plasmid</keyword>
<keyword id="KW-0804">Transcription</keyword>
<keyword id="KW-0805">Transcription regulation</keyword>
<gene>
    <name type="primary">alkS</name>
</gene>
<accession>P17051</accession>
<feature type="chain" id="PRO_0000184139" description="HTH-type transcriptional regulator AlkS">
    <location>
        <begin position="1"/>
        <end position="882"/>
    </location>
</feature>
<feature type="domain" description="HTH luxR-type" evidence="2">
    <location>
        <begin position="815"/>
        <end position="880"/>
    </location>
</feature>
<feature type="DNA-binding region" description="H-T-H motif" evidence="2">
    <location>
        <begin position="839"/>
        <end position="858"/>
    </location>
</feature>
<feature type="binding site" evidence="1">
    <location>
        <begin position="51"/>
        <end position="58"/>
    </location>
    <ligand>
        <name>ATP</name>
        <dbReference type="ChEBI" id="CHEBI:30616"/>
    </ligand>
</feature>